<comment type="function">
    <text evidence="1">A hormone that controls sex pheromone production in females and pheromone responsiveness in male. Also mediates visceral muscle contractile activity (myotropic activity) (By similarity).</text>
</comment>
<comment type="subcellular location">
    <subcellularLocation>
        <location>Secreted</location>
    </subcellularLocation>
</comment>
<comment type="miscellaneous">
    <text evidence="1">Juvenile hormone seems to allow PBAN release, which then induces pheromone biosynthesis.</text>
</comment>
<comment type="similarity">
    <text evidence="3">Belongs to the pyrokinin family.</text>
</comment>
<name>PBAN_MAMBR</name>
<gene>
    <name type="primary">PBAN</name>
</gene>
<feature type="peptide" id="PRO_0000029943" description="Diapause hormone homolog" evidence="2">
    <location>
        <begin position="1" status="less than"/>
        <end position="8"/>
    </location>
</feature>
<feature type="propeptide" id="PRO_0000029944">
    <location>
        <begin position="12"/>
        <end position="55"/>
    </location>
</feature>
<feature type="peptide" id="PRO_0000029945" description="Alpha-SG neuropeptide" evidence="2">
    <location>
        <begin position="58"/>
        <end position="64"/>
    </location>
</feature>
<feature type="peptide" id="PRO_0000029946" description="Beta-SG neuropeptide" evidence="2">
    <location>
        <begin position="67"/>
        <end position="84"/>
    </location>
</feature>
<feature type="peptide" id="PRO_0000029947" description="Pheromone biosynthesis-activating neuropeptide">
    <location>
        <begin position="88"/>
        <end position="120"/>
    </location>
</feature>
<feature type="peptide" id="PRO_0000029948" description="Gamma-SG neuropeptide" evidence="2">
    <location>
        <begin position="123"/>
        <end position="130"/>
    </location>
</feature>
<feature type="propeptide" id="PRO_0000029949">
    <location>
        <begin position="133"/>
        <end position="155"/>
    </location>
</feature>
<feature type="modified residue" description="Isoleucine amide" evidence="1">
    <location>
        <position position="8"/>
    </location>
</feature>
<feature type="modified residue" description="Leucine amide" evidence="1">
    <location>
        <position position="64"/>
    </location>
</feature>
<feature type="modified residue" description="Leucine amide" evidence="1">
    <location>
        <position position="84"/>
    </location>
</feature>
<feature type="modified residue" description="Leucine amide" evidence="1">
    <location>
        <position position="120"/>
    </location>
</feature>
<feature type="modified residue" description="Leucine amide" evidence="1">
    <location>
        <position position="130"/>
    </location>
</feature>
<feature type="non-terminal residue">
    <location>
        <position position="1"/>
    </location>
</feature>
<proteinExistence type="evidence at transcript level"/>
<dbReference type="EMBL" id="AF044079">
    <property type="protein sequence ID" value="AAC02094.1"/>
    <property type="molecule type" value="mRNA"/>
</dbReference>
<dbReference type="GO" id="GO:0005576">
    <property type="term" value="C:extracellular region"/>
    <property type="evidence" value="ECO:0007669"/>
    <property type="project" value="UniProtKB-SubCell"/>
</dbReference>
<dbReference type="GO" id="GO:0005184">
    <property type="term" value="F:neuropeptide hormone activity"/>
    <property type="evidence" value="ECO:0007669"/>
    <property type="project" value="InterPro"/>
</dbReference>
<dbReference type="GO" id="GO:0007218">
    <property type="term" value="P:neuropeptide signaling pathway"/>
    <property type="evidence" value="ECO:0007669"/>
    <property type="project" value="UniProtKB-KW"/>
</dbReference>
<dbReference type="GO" id="GO:0042811">
    <property type="term" value="P:pheromone biosynthetic process"/>
    <property type="evidence" value="ECO:0007669"/>
    <property type="project" value="InterPro"/>
</dbReference>
<dbReference type="GO" id="GO:0019236">
    <property type="term" value="P:response to pheromone"/>
    <property type="evidence" value="ECO:0007669"/>
    <property type="project" value="UniProtKB-KW"/>
</dbReference>
<dbReference type="InterPro" id="IPR008730">
    <property type="entry name" value="PBAN"/>
</dbReference>
<dbReference type="InterPro" id="IPR001484">
    <property type="entry name" value="Pyrokinin_CS"/>
</dbReference>
<dbReference type="Pfam" id="PF05874">
    <property type="entry name" value="PBAN"/>
    <property type="match status" value="1"/>
</dbReference>
<dbReference type="PROSITE" id="PS00539">
    <property type="entry name" value="PYROKININ"/>
    <property type="match status" value="3"/>
</dbReference>
<accession>O45027</accession>
<reference key="1">
    <citation type="journal article" date="1998" name="Insect Biochem. Mol. Biol.">
        <title>cDNA cloning and sequence determination of the pheromone biosynthesis activating neuropeptide of Mamestra brassicae: a new member of the PBAN family.</title>
        <authorList>
            <person name="Jacquin-Joly E."/>
            <person name="Burnet M."/>
            <person name="Francois M.-C."/>
            <person name="Ammar D."/>
            <person name="Nagnan-Meillour P."/>
            <person name="Descoins C."/>
        </authorList>
    </citation>
    <scope>NUCLEOTIDE SEQUENCE [MRNA]</scope>
</reference>
<sequence length="155" mass="18096">GLWFGPRIGKRSLRMATEDNRQAFFKLLEAADALKYYYDQLPYEMQADEPETRVTKKVIFTPKLGRSLAYDDKVFENVEFTPRLGRRLADDMPATPADQEMYRPDPEQIDSRTKYFSPRLGRTMNFSPRLGRELAYEMVPSKIRVVRSTNKTQST</sequence>
<protein>
    <recommendedName>
        <fullName>PBAN-type neuropeptides</fullName>
    </recommendedName>
    <alternativeName>
        <fullName>Pheromone/pyrokinin biosynthesis-activating neuropeptide</fullName>
    </alternativeName>
    <component>
        <recommendedName>
            <fullName>Diapause hormone homolog</fullName>
            <shortName>DH</shortName>
        </recommendedName>
    </component>
    <component>
        <recommendedName>
            <fullName>Alpha-SG neuropeptide</fullName>
            <shortName>Mab-alpha-NP</shortName>
        </recommendedName>
    </component>
    <component>
        <recommendedName>
            <fullName>Beta-SG neuropeptide</fullName>
            <shortName>Mab-beta-NP</shortName>
        </recommendedName>
        <alternativeName>
            <fullName>Pyrokinin-1</fullName>
        </alternativeName>
    </component>
    <component>
        <recommendedName>
            <fullName>Pheromone biosynthesis-activating neuropeptide</fullName>
            <shortName>Mab-PBAN</shortName>
        </recommendedName>
        <alternativeName>
            <fullName>Pyrokinin-2</fullName>
        </alternativeName>
    </component>
    <component>
        <recommendedName>
            <fullName>Gamma-SG neuropeptide</fullName>
            <shortName>Mab-gamma-NP</shortName>
        </recommendedName>
        <alternativeName>
            <fullName>Pyrokinin-3</fullName>
        </alternativeName>
    </component>
</protein>
<keyword id="KW-0027">Amidation</keyword>
<keyword id="KW-0165">Cleavage on pair of basic residues</keyword>
<keyword id="KW-0372">Hormone</keyword>
<keyword id="KW-0527">Neuropeptide</keyword>
<keyword id="KW-0589">Pheromone response</keyword>
<keyword id="KW-0964">Secreted</keyword>
<organism>
    <name type="scientific">Mamestra brassicae</name>
    <name type="common">Cabbage moth</name>
    <dbReference type="NCBI Taxonomy" id="55057"/>
    <lineage>
        <taxon>Eukaryota</taxon>
        <taxon>Metazoa</taxon>
        <taxon>Ecdysozoa</taxon>
        <taxon>Arthropoda</taxon>
        <taxon>Hexapoda</taxon>
        <taxon>Insecta</taxon>
        <taxon>Pterygota</taxon>
        <taxon>Neoptera</taxon>
        <taxon>Endopterygota</taxon>
        <taxon>Lepidoptera</taxon>
        <taxon>Glossata</taxon>
        <taxon>Ditrysia</taxon>
        <taxon>Noctuoidea</taxon>
        <taxon>Noctuidae</taxon>
        <taxon>Hadeninae</taxon>
        <taxon>Mamestra</taxon>
    </lineage>
</organism>
<evidence type="ECO:0000250" key="1"/>
<evidence type="ECO:0000255" key="2"/>
<evidence type="ECO:0000305" key="3"/>